<gene>
    <name evidence="1" type="primary">mdtJ</name>
    <name type="ordered locus">ECDH10B_1733</name>
</gene>
<dbReference type="EMBL" id="CP000948">
    <property type="protein sequence ID" value="ACB02806.1"/>
    <property type="molecule type" value="Genomic_DNA"/>
</dbReference>
<dbReference type="RefSeq" id="WP_000276149.1">
    <property type="nucleotide sequence ID" value="NC_010473.1"/>
</dbReference>
<dbReference type="SMR" id="B1XF65"/>
<dbReference type="GeneID" id="93775748"/>
<dbReference type="KEGG" id="ecd:ECDH10B_1733"/>
<dbReference type="HOGENOM" id="CLU_133067_0_0_6"/>
<dbReference type="GO" id="GO:0005886">
    <property type="term" value="C:plasma membrane"/>
    <property type="evidence" value="ECO:0007669"/>
    <property type="project" value="UniProtKB-SubCell"/>
</dbReference>
<dbReference type="GO" id="GO:0015199">
    <property type="term" value="F:amino-acid betaine transmembrane transporter activity"/>
    <property type="evidence" value="ECO:0007669"/>
    <property type="project" value="TreeGrafter"/>
</dbReference>
<dbReference type="GO" id="GO:0015297">
    <property type="term" value="F:antiporter activity"/>
    <property type="evidence" value="ECO:0007669"/>
    <property type="project" value="TreeGrafter"/>
</dbReference>
<dbReference type="GO" id="GO:0015220">
    <property type="term" value="F:choline transmembrane transporter activity"/>
    <property type="evidence" value="ECO:0007669"/>
    <property type="project" value="TreeGrafter"/>
</dbReference>
<dbReference type="GO" id="GO:0015606">
    <property type="term" value="F:spermidine transmembrane transporter activity"/>
    <property type="evidence" value="ECO:0007669"/>
    <property type="project" value="UniProtKB-UniRule"/>
</dbReference>
<dbReference type="GO" id="GO:0031460">
    <property type="term" value="P:glycine betaine transport"/>
    <property type="evidence" value="ECO:0007669"/>
    <property type="project" value="TreeGrafter"/>
</dbReference>
<dbReference type="FunFam" id="1.10.3730.20:FF:000001">
    <property type="entry name" value="Quaternary ammonium compound resistance transporter SugE"/>
    <property type="match status" value="1"/>
</dbReference>
<dbReference type="Gene3D" id="1.10.3730.20">
    <property type="match status" value="1"/>
</dbReference>
<dbReference type="HAMAP" id="MF_01598">
    <property type="entry name" value="MdtJ"/>
    <property type="match status" value="1"/>
</dbReference>
<dbReference type="InterPro" id="IPR000390">
    <property type="entry name" value="Small_drug/metabolite_transptr"/>
</dbReference>
<dbReference type="InterPro" id="IPR045324">
    <property type="entry name" value="Small_multidrug_res"/>
</dbReference>
<dbReference type="InterPro" id="IPR023740">
    <property type="entry name" value="Spermidine_export_MdtJ"/>
</dbReference>
<dbReference type="NCBIfam" id="NF007767">
    <property type="entry name" value="PRK10452.1"/>
    <property type="match status" value="1"/>
</dbReference>
<dbReference type="PANTHER" id="PTHR30561">
    <property type="entry name" value="SMR FAMILY PROTON-DEPENDENT DRUG EFFLUX TRANSPORTER SUGE"/>
    <property type="match status" value="1"/>
</dbReference>
<dbReference type="PANTHER" id="PTHR30561:SF2">
    <property type="entry name" value="SPERMIDINE EXPORT PROTEIN MDTJ"/>
    <property type="match status" value="1"/>
</dbReference>
<dbReference type="Pfam" id="PF00893">
    <property type="entry name" value="Multi_Drug_Res"/>
    <property type="match status" value="1"/>
</dbReference>
<dbReference type="SUPFAM" id="SSF103481">
    <property type="entry name" value="Multidrug resistance efflux transporter EmrE"/>
    <property type="match status" value="1"/>
</dbReference>
<sequence>MYIYWILLGLAIATEITGTLSMKWASVSEGNGGFILMLVMISLSYIFLSFAVKKIALGVAYALWEGIGILFITLFSVLLFDESLSLMKIAGLTTLVAGIVLIKSGTRKARKPELEVNHGAV</sequence>
<protein>
    <recommendedName>
        <fullName evidence="1">Spermidine export protein MdtJ</fullName>
    </recommendedName>
</protein>
<accession>B1XF65</accession>
<reference key="1">
    <citation type="journal article" date="2008" name="J. Bacteriol.">
        <title>The complete genome sequence of Escherichia coli DH10B: insights into the biology of a laboratory workhorse.</title>
        <authorList>
            <person name="Durfee T."/>
            <person name="Nelson R."/>
            <person name="Baldwin S."/>
            <person name="Plunkett G. III"/>
            <person name="Burland V."/>
            <person name="Mau B."/>
            <person name="Petrosino J.F."/>
            <person name="Qin X."/>
            <person name="Muzny D.M."/>
            <person name="Ayele M."/>
            <person name="Gibbs R.A."/>
            <person name="Csorgo B."/>
            <person name="Posfai G."/>
            <person name="Weinstock G.M."/>
            <person name="Blattner F.R."/>
        </authorList>
    </citation>
    <scope>NUCLEOTIDE SEQUENCE [LARGE SCALE GENOMIC DNA]</scope>
    <source>
        <strain>K12 / DH10B</strain>
    </source>
</reference>
<feature type="chain" id="PRO_1000197329" description="Spermidine export protein MdtJ">
    <location>
        <begin position="1"/>
        <end position="121"/>
    </location>
</feature>
<feature type="transmembrane region" description="Helical" evidence="1">
    <location>
        <begin position="1"/>
        <end position="21"/>
    </location>
</feature>
<feature type="transmembrane region" description="Helical" evidence="1">
    <location>
        <begin position="32"/>
        <end position="52"/>
    </location>
</feature>
<feature type="transmembrane region" description="Helical" evidence="1">
    <location>
        <begin position="55"/>
        <end position="75"/>
    </location>
</feature>
<feature type="transmembrane region" description="Helical" evidence="1">
    <location>
        <begin position="82"/>
        <end position="102"/>
    </location>
</feature>
<evidence type="ECO:0000255" key="1">
    <source>
        <dbReference type="HAMAP-Rule" id="MF_01598"/>
    </source>
</evidence>
<keyword id="KW-0997">Cell inner membrane</keyword>
<keyword id="KW-1003">Cell membrane</keyword>
<keyword id="KW-0472">Membrane</keyword>
<keyword id="KW-0812">Transmembrane</keyword>
<keyword id="KW-1133">Transmembrane helix</keyword>
<keyword id="KW-0813">Transport</keyword>
<organism>
    <name type="scientific">Escherichia coli (strain K12 / DH10B)</name>
    <dbReference type="NCBI Taxonomy" id="316385"/>
    <lineage>
        <taxon>Bacteria</taxon>
        <taxon>Pseudomonadati</taxon>
        <taxon>Pseudomonadota</taxon>
        <taxon>Gammaproteobacteria</taxon>
        <taxon>Enterobacterales</taxon>
        <taxon>Enterobacteriaceae</taxon>
        <taxon>Escherichia</taxon>
    </lineage>
</organism>
<comment type="function">
    <text evidence="1">Catalyzes the excretion of spermidine.</text>
</comment>
<comment type="subunit">
    <text evidence="1">Forms a complex with MdtI.</text>
</comment>
<comment type="subcellular location">
    <subcellularLocation>
        <location evidence="1">Cell inner membrane</location>
        <topology evidence="1">Multi-pass membrane protein</topology>
    </subcellularLocation>
</comment>
<comment type="similarity">
    <text evidence="1">Belongs to the drug/metabolite transporter (DMT) superfamily. Small multidrug resistance (SMR) (TC 2.A.7.1) family. MdtJ subfamily.</text>
</comment>
<proteinExistence type="inferred from homology"/>
<name>MDTJ_ECODH</name>